<keyword id="KW-0488">Methylation</keyword>
<keyword id="KW-0687">Ribonucleoprotein</keyword>
<keyword id="KW-0689">Ribosomal protein</keyword>
<keyword id="KW-0694">RNA-binding</keyword>
<keyword id="KW-0699">rRNA-binding</keyword>
<proteinExistence type="inferred from homology"/>
<gene>
    <name evidence="2" type="primary">rplK</name>
    <name type="ordered locus">SBO_4003</name>
</gene>
<organism>
    <name type="scientific">Shigella boydii serotype 4 (strain Sb227)</name>
    <dbReference type="NCBI Taxonomy" id="300268"/>
    <lineage>
        <taxon>Bacteria</taxon>
        <taxon>Pseudomonadati</taxon>
        <taxon>Pseudomonadota</taxon>
        <taxon>Gammaproteobacteria</taxon>
        <taxon>Enterobacterales</taxon>
        <taxon>Enterobacteriaceae</taxon>
        <taxon>Shigella</taxon>
    </lineage>
</organism>
<reference key="1">
    <citation type="journal article" date="2005" name="Nucleic Acids Res.">
        <title>Genome dynamics and diversity of Shigella species, the etiologic agents of bacillary dysentery.</title>
        <authorList>
            <person name="Yang F."/>
            <person name="Yang J."/>
            <person name="Zhang X."/>
            <person name="Chen L."/>
            <person name="Jiang Y."/>
            <person name="Yan Y."/>
            <person name="Tang X."/>
            <person name="Wang J."/>
            <person name="Xiong Z."/>
            <person name="Dong J."/>
            <person name="Xue Y."/>
            <person name="Zhu Y."/>
            <person name="Xu X."/>
            <person name="Sun L."/>
            <person name="Chen S."/>
            <person name="Nie H."/>
            <person name="Peng J."/>
            <person name="Xu J."/>
            <person name="Wang Y."/>
            <person name="Yuan Z."/>
            <person name="Wen Y."/>
            <person name="Yao Z."/>
            <person name="Shen Y."/>
            <person name="Qiang B."/>
            <person name="Hou Y."/>
            <person name="Yu J."/>
            <person name="Jin Q."/>
        </authorList>
    </citation>
    <scope>NUCLEOTIDE SEQUENCE [LARGE SCALE GENOMIC DNA]</scope>
    <source>
        <strain>Sb227</strain>
    </source>
</reference>
<dbReference type="EMBL" id="CP000036">
    <property type="protein sequence ID" value="ABB68444.1"/>
    <property type="molecule type" value="Genomic_DNA"/>
</dbReference>
<dbReference type="RefSeq" id="WP_005009509.1">
    <property type="nucleotide sequence ID" value="NC_007613.1"/>
</dbReference>
<dbReference type="SMR" id="Q31U14"/>
<dbReference type="KEGG" id="sbo:SBO_4003"/>
<dbReference type="HOGENOM" id="CLU_074237_2_0_6"/>
<dbReference type="Proteomes" id="UP000007067">
    <property type="component" value="Chromosome"/>
</dbReference>
<dbReference type="GO" id="GO:0022625">
    <property type="term" value="C:cytosolic large ribosomal subunit"/>
    <property type="evidence" value="ECO:0007669"/>
    <property type="project" value="TreeGrafter"/>
</dbReference>
<dbReference type="GO" id="GO:0070180">
    <property type="term" value="F:large ribosomal subunit rRNA binding"/>
    <property type="evidence" value="ECO:0007669"/>
    <property type="project" value="UniProtKB-UniRule"/>
</dbReference>
<dbReference type="GO" id="GO:0003735">
    <property type="term" value="F:structural constituent of ribosome"/>
    <property type="evidence" value="ECO:0007669"/>
    <property type="project" value="InterPro"/>
</dbReference>
<dbReference type="GO" id="GO:0006412">
    <property type="term" value="P:translation"/>
    <property type="evidence" value="ECO:0007669"/>
    <property type="project" value="UniProtKB-UniRule"/>
</dbReference>
<dbReference type="CDD" id="cd00349">
    <property type="entry name" value="Ribosomal_L11"/>
    <property type="match status" value="1"/>
</dbReference>
<dbReference type="FunFam" id="1.10.10.250:FF:000001">
    <property type="entry name" value="50S ribosomal protein L11"/>
    <property type="match status" value="1"/>
</dbReference>
<dbReference type="FunFam" id="3.30.1550.10:FF:000001">
    <property type="entry name" value="50S ribosomal protein L11"/>
    <property type="match status" value="1"/>
</dbReference>
<dbReference type="Gene3D" id="1.10.10.250">
    <property type="entry name" value="Ribosomal protein L11, C-terminal domain"/>
    <property type="match status" value="1"/>
</dbReference>
<dbReference type="Gene3D" id="3.30.1550.10">
    <property type="entry name" value="Ribosomal protein L11/L12, N-terminal domain"/>
    <property type="match status" value="1"/>
</dbReference>
<dbReference type="HAMAP" id="MF_00736">
    <property type="entry name" value="Ribosomal_uL11"/>
    <property type="match status" value="1"/>
</dbReference>
<dbReference type="InterPro" id="IPR000911">
    <property type="entry name" value="Ribosomal_uL11"/>
</dbReference>
<dbReference type="InterPro" id="IPR006519">
    <property type="entry name" value="Ribosomal_uL11_bac-typ"/>
</dbReference>
<dbReference type="InterPro" id="IPR020783">
    <property type="entry name" value="Ribosomal_uL11_C"/>
</dbReference>
<dbReference type="InterPro" id="IPR036769">
    <property type="entry name" value="Ribosomal_uL11_C_sf"/>
</dbReference>
<dbReference type="InterPro" id="IPR020785">
    <property type="entry name" value="Ribosomal_uL11_CS"/>
</dbReference>
<dbReference type="InterPro" id="IPR020784">
    <property type="entry name" value="Ribosomal_uL11_N"/>
</dbReference>
<dbReference type="InterPro" id="IPR036796">
    <property type="entry name" value="Ribosomal_uL11_N_sf"/>
</dbReference>
<dbReference type="NCBIfam" id="TIGR01632">
    <property type="entry name" value="L11_bact"/>
    <property type="match status" value="1"/>
</dbReference>
<dbReference type="PANTHER" id="PTHR11661">
    <property type="entry name" value="60S RIBOSOMAL PROTEIN L12"/>
    <property type="match status" value="1"/>
</dbReference>
<dbReference type="PANTHER" id="PTHR11661:SF1">
    <property type="entry name" value="LARGE RIBOSOMAL SUBUNIT PROTEIN UL11M"/>
    <property type="match status" value="1"/>
</dbReference>
<dbReference type="Pfam" id="PF00298">
    <property type="entry name" value="Ribosomal_L11"/>
    <property type="match status" value="1"/>
</dbReference>
<dbReference type="Pfam" id="PF03946">
    <property type="entry name" value="Ribosomal_L11_N"/>
    <property type="match status" value="1"/>
</dbReference>
<dbReference type="SMART" id="SM00649">
    <property type="entry name" value="RL11"/>
    <property type="match status" value="1"/>
</dbReference>
<dbReference type="SUPFAM" id="SSF54747">
    <property type="entry name" value="Ribosomal L11/L12e N-terminal domain"/>
    <property type="match status" value="1"/>
</dbReference>
<dbReference type="SUPFAM" id="SSF46906">
    <property type="entry name" value="Ribosomal protein L11, C-terminal domain"/>
    <property type="match status" value="1"/>
</dbReference>
<dbReference type="PROSITE" id="PS00359">
    <property type="entry name" value="RIBOSOMAL_L11"/>
    <property type="match status" value="1"/>
</dbReference>
<evidence type="ECO:0000250" key="1"/>
<evidence type="ECO:0000255" key="2">
    <source>
        <dbReference type="HAMAP-Rule" id="MF_00736"/>
    </source>
</evidence>
<evidence type="ECO:0000305" key="3"/>
<sequence>MAKKVQAYVKLQVAAGMANPSPPVGPALGQQGVNIMEFCKAFNAKTDSIEKGLPIPVVITVYADRSFTFVTKTPPAAVLLKKAAGIKSGAGKPNKDKVGKISRAQLQEIAQTKAADMTGADIEAMTRSIEGTARSMGLVVED</sequence>
<accession>Q31U14</accession>
<name>RL11_SHIBS</name>
<feature type="initiator methionine" description="Removed" evidence="1">
    <location>
        <position position="1"/>
    </location>
</feature>
<feature type="chain" id="PRO_0000258211" description="Large ribosomal subunit protein uL11">
    <location>
        <begin position="2"/>
        <end position="142"/>
    </location>
</feature>
<protein>
    <recommendedName>
        <fullName evidence="2">Large ribosomal subunit protein uL11</fullName>
    </recommendedName>
    <alternativeName>
        <fullName evidence="3">50S ribosomal protein L11</fullName>
    </alternativeName>
</protein>
<comment type="function">
    <text evidence="2">Forms part of the ribosomal stalk which helps the ribosome interact with GTP-bound translation factors.</text>
</comment>
<comment type="subunit">
    <text evidence="2">Part of the ribosomal stalk of the 50S ribosomal subunit. Interacts with L10 and the large rRNA to form the base of the stalk. L10 forms an elongated spine to which L12 dimers bind in a sequential fashion forming a multimeric L10(L12)X complex.</text>
</comment>
<comment type="PTM">
    <text evidence="2">One or more lysine residues are methylated.</text>
</comment>
<comment type="similarity">
    <text evidence="2">Belongs to the universal ribosomal protein uL11 family.</text>
</comment>